<feature type="chain" id="PRO_0000300402" description="DNA-directed RNA polymerase subunit beta">
    <location>
        <begin position="1"/>
        <end position="1345"/>
    </location>
</feature>
<name>RPOB_SHESR</name>
<organism>
    <name type="scientific">Shewanella sp. (strain MR-7)</name>
    <dbReference type="NCBI Taxonomy" id="60481"/>
    <lineage>
        <taxon>Bacteria</taxon>
        <taxon>Pseudomonadati</taxon>
        <taxon>Pseudomonadota</taxon>
        <taxon>Gammaproteobacteria</taxon>
        <taxon>Alteromonadales</taxon>
        <taxon>Shewanellaceae</taxon>
        <taxon>Shewanella</taxon>
    </lineage>
</organism>
<dbReference type="EC" id="2.7.7.6" evidence="1"/>
<dbReference type="EMBL" id="CP000444">
    <property type="protein sequence ID" value="ABI41193.1"/>
    <property type="molecule type" value="Genomic_DNA"/>
</dbReference>
<dbReference type="SMR" id="Q0I0B2"/>
<dbReference type="KEGG" id="shm:Shewmr7_0187"/>
<dbReference type="HOGENOM" id="CLU_000524_4_1_6"/>
<dbReference type="GO" id="GO:0000428">
    <property type="term" value="C:DNA-directed RNA polymerase complex"/>
    <property type="evidence" value="ECO:0007669"/>
    <property type="project" value="UniProtKB-KW"/>
</dbReference>
<dbReference type="GO" id="GO:0003677">
    <property type="term" value="F:DNA binding"/>
    <property type="evidence" value="ECO:0007669"/>
    <property type="project" value="UniProtKB-UniRule"/>
</dbReference>
<dbReference type="GO" id="GO:0003899">
    <property type="term" value="F:DNA-directed RNA polymerase activity"/>
    <property type="evidence" value="ECO:0007669"/>
    <property type="project" value="UniProtKB-UniRule"/>
</dbReference>
<dbReference type="GO" id="GO:0032549">
    <property type="term" value="F:ribonucleoside binding"/>
    <property type="evidence" value="ECO:0007669"/>
    <property type="project" value="InterPro"/>
</dbReference>
<dbReference type="GO" id="GO:0006351">
    <property type="term" value="P:DNA-templated transcription"/>
    <property type="evidence" value="ECO:0007669"/>
    <property type="project" value="UniProtKB-UniRule"/>
</dbReference>
<dbReference type="CDD" id="cd00653">
    <property type="entry name" value="RNA_pol_B_RPB2"/>
    <property type="match status" value="1"/>
</dbReference>
<dbReference type="FunFam" id="2.40.270.10:FF:000003">
    <property type="entry name" value="DNA-directed RNA polymerase subunit beta"/>
    <property type="match status" value="1"/>
</dbReference>
<dbReference type="FunFam" id="2.40.270.10:FF:000004">
    <property type="entry name" value="DNA-directed RNA polymerase subunit beta"/>
    <property type="match status" value="1"/>
</dbReference>
<dbReference type="FunFam" id="2.40.50.100:FF:000006">
    <property type="entry name" value="DNA-directed RNA polymerase subunit beta"/>
    <property type="match status" value="1"/>
</dbReference>
<dbReference type="FunFam" id="2.40.50.150:FF:000001">
    <property type="entry name" value="DNA-directed RNA polymerase subunit beta"/>
    <property type="match status" value="1"/>
</dbReference>
<dbReference type="FunFam" id="3.90.1100.10:FF:000002">
    <property type="entry name" value="DNA-directed RNA polymerase subunit beta"/>
    <property type="match status" value="1"/>
</dbReference>
<dbReference type="FunFam" id="3.90.1110.10:FF:000001">
    <property type="entry name" value="DNA-directed RNA polymerase subunit beta"/>
    <property type="match status" value="1"/>
</dbReference>
<dbReference type="FunFam" id="3.90.1110.10:FF:000004">
    <property type="entry name" value="DNA-directed RNA polymerase subunit beta"/>
    <property type="match status" value="1"/>
</dbReference>
<dbReference type="FunFam" id="3.90.1800.10:FF:000001">
    <property type="entry name" value="DNA-directed RNA polymerase subunit beta"/>
    <property type="match status" value="1"/>
</dbReference>
<dbReference type="Gene3D" id="2.40.50.100">
    <property type="match status" value="1"/>
</dbReference>
<dbReference type="Gene3D" id="2.40.50.150">
    <property type="match status" value="1"/>
</dbReference>
<dbReference type="Gene3D" id="3.90.1100.10">
    <property type="match status" value="2"/>
</dbReference>
<dbReference type="Gene3D" id="2.30.150.10">
    <property type="entry name" value="DNA-directed RNA polymerase, beta subunit, external 1 domain"/>
    <property type="match status" value="1"/>
</dbReference>
<dbReference type="Gene3D" id="2.40.270.10">
    <property type="entry name" value="DNA-directed RNA polymerase, subunit 2, domain 6"/>
    <property type="match status" value="2"/>
</dbReference>
<dbReference type="Gene3D" id="3.90.1800.10">
    <property type="entry name" value="RNA polymerase alpha subunit dimerisation domain"/>
    <property type="match status" value="1"/>
</dbReference>
<dbReference type="Gene3D" id="3.90.1110.10">
    <property type="entry name" value="RNA polymerase Rpb2, domain 2"/>
    <property type="match status" value="2"/>
</dbReference>
<dbReference type="HAMAP" id="MF_01321">
    <property type="entry name" value="RNApol_bact_RpoB"/>
    <property type="match status" value="1"/>
</dbReference>
<dbReference type="InterPro" id="IPR042107">
    <property type="entry name" value="DNA-dir_RNA_pol_bsu_ext_1_sf"/>
</dbReference>
<dbReference type="InterPro" id="IPR019462">
    <property type="entry name" value="DNA-dir_RNA_pol_bsu_external_1"/>
</dbReference>
<dbReference type="InterPro" id="IPR015712">
    <property type="entry name" value="DNA-dir_RNA_pol_su2"/>
</dbReference>
<dbReference type="InterPro" id="IPR007120">
    <property type="entry name" value="DNA-dir_RNAP_su2_dom"/>
</dbReference>
<dbReference type="InterPro" id="IPR037033">
    <property type="entry name" value="DNA-dir_RNAP_su2_hyb_sf"/>
</dbReference>
<dbReference type="InterPro" id="IPR010243">
    <property type="entry name" value="RNA_pol_bsu_bac"/>
</dbReference>
<dbReference type="InterPro" id="IPR007121">
    <property type="entry name" value="RNA_pol_bsu_CS"/>
</dbReference>
<dbReference type="InterPro" id="IPR007644">
    <property type="entry name" value="RNA_pol_bsu_protrusion"/>
</dbReference>
<dbReference type="InterPro" id="IPR007642">
    <property type="entry name" value="RNA_pol_Rpb2_2"/>
</dbReference>
<dbReference type="InterPro" id="IPR037034">
    <property type="entry name" value="RNA_pol_Rpb2_2_sf"/>
</dbReference>
<dbReference type="InterPro" id="IPR007645">
    <property type="entry name" value="RNA_pol_Rpb2_3"/>
</dbReference>
<dbReference type="InterPro" id="IPR007641">
    <property type="entry name" value="RNA_pol_Rpb2_7"/>
</dbReference>
<dbReference type="InterPro" id="IPR014724">
    <property type="entry name" value="RNA_pol_RPB2_OB-fold"/>
</dbReference>
<dbReference type="NCBIfam" id="NF001616">
    <property type="entry name" value="PRK00405.1"/>
    <property type="match status" value="1"/>
</dbReference>
<dbReference type="NCBIfam" id="TIGR02013">
    <property type="entry name" value="rpoB"/>
    <property type="match status" value="1"/>
</dbReference>
<dbReference type="PANTHER" id="PTHR20856">
    <property type="entry name" value="DNA-DIRECTED RNA POLYMERASE I SUBUNIT 2"/>
    <property type="match status" value="1"/>
</dbReference>
<dbReference type="Pfam" id="PF04563">
    <property type="entry name" value="RNA_pol_Rpb2_1"/>
    <property type="match status" value="1"/>
</dbReference>
<dbReference type="Pfam" id="PF04561">
    <property type="entry name" value="RNA_pol_Rpb2_2"/>
    <property type="match status" value="2"/>
</dbReference>
<dbReference type="Pfam" id="PF04565">
    <property type="entry name" value="RNA_pol_Rpb2_3"/>
    <property type="match status" value="1"/>
</dbReference>
<dbReference type="Pfam" id="PF10385">
    <property type="entry name" value="RNA_pol_Rpb2_45"/>
    <property type="match status" value="1"/>
</dbReference>
<dbReference type="Pfam" id="PF00562">
    <property type="entry name" value="RNA_pol_Rpb2_6"/>
    <property type="match status" value="1"/>
</dbReference>
<dbReference type="Pfam" id="PF04560">
    <property type="entry name" value="RNA_pol_Rpb2_7"/>
    <property type="match status" value="1"/>
</dbReference>
<dbReference type="SUPFAM" id="SSF64484">
    <property type="entry name" value="beta and beta-prime subunits of DNA dependent RNA-polymerase"/>
    <property type="match status" value="1"/>
</dbReference>
<dbReference type="PROSITE" id="PS01166">
    <property type="entry name" value="RNA_POL_BETA"/>
    <property type="match status" value="1"/>
</dbReference>
<reference key="1">
    <citation type="submission" date="2006-08" db="EMBL/GenBank/DDBJ databases">
        <title>Complete sequence of chromosome 1 of Shewanella sp. MR-7.</title>
        <authorList>
            <person name="Copeland A."/>
            <person name="Lucas S."/>
            <person name="Lapidus A."/>
            <person name="Barry K."/>
            <person name="Detter J.C."/>
            <person name="Glavina del Rio T."/>
            <person name="Hammon N."/>
            <person name="Israni S."/>
            <person name="Dalin E."/>
            <person name="Tice H."/>
            <person name="Pitluck S."/>
            <person name="Kiss H."/>
            <person name="Brettin T."/>
            <person name="Bruce D."/>
            <person name="Han C."/>
            <person name="Tapia R."/>
            <person name="Gilna P."/>
            <person name="Schmutz J."/>
            <person name="Larimer F."/>
            <person name="Land M."/>
            <person name="Hauser L."/>
            <person name="Kyrpides N."/>
            <person name="Mikhailova N."/>
            <person name="Nealson K."/>
            <person name="Konstantinidis K."/>
            <person name="Klappenbach J."/>
            <person name="Tiedje J."/>
            <person name="Richardson P."/>
        </authorList>
    </citation>
    <scope>NUCLEOTIDE SEQUENCE [LARGE SCALE GENOMIC DNA]</scope>
    <source>
        <strain>MR-7</strain>
    </source>
</reference>
<accession>Q0I0B2</accession>
<sequence>MVYSYSEKKRIRKDFGKRPQVLDIPYLLSIQLDSFKKFTDQDPTGERGLEAAFRSVFPIKSFSGNSELQYVSYKLGEPVFDVKECQIRGVTYSAPLRVKLRMVLYDREAAAGTVKDIKEQEVYMGDIPLMTDNGTFVINGTERVIVSQLHRSPGVFFDHDRGKTHSSGKVLYNARIIPYRGSWLDFEFDPKDALFVRIDRRRKLPATIILRALEYSTQEILDLFFERVEFKIKKDTLVMTLVPERLRGETASYDIKDAEGSVLVEAGRRITARHIRQLEKTNTTELEVPVEYIVGKYAAQDYIDPDTGEVLVSANSEISLEDLAKLSLAGIKELSTLYINELDHGAYISDTLRIDPTTNRLEALVEIYRMMRPGEPPTKDAAEALFQNLFFSEERYDLSKVGRMKFNRRLSIPDDEGSGVLSKEDIVAVMKNIIHIRNGFDEVDDIDHLGNRRIRSVGEMAENQFRVGLVRVERAVRERLSLGDLNELMPQDLINAKPISAAVKEFFGSSQLSQFMDQNNPLSEVTHKRRISALGPGGLTRERAGFEVRDVHPTHYGRLCPIETPEGPNIGLINSLASFARTNSYGFLETPYRKVVDGVITDDVEYLSAIEEGRYVIAQANIEVDSQGRMVEEQIACRHKGESTFMRASDIQYMDVSPQQIISVAASLIPFLEHDDANRALMGANMQRQAVPTLKSEKPLVGTGIERTLAVDSGVVVAAKRGGVIDYVDASRIVVKVNEDELRPGEAGIDIYNLTKYTRSNQNTCINQRPCCSVGEPVVRGDVLADGPSTDLGDLALGQNMRIAFMPWNGYNFEDSILISERVAQEDRFTTIHIQELSCIARDTKLGSEEITADIPNVGESALSKLDESGIVYIGAEVKGGDILVGKVTPKGETQLTPEEKLLRAIFGEKASDVKDSSLRVPNSVKGTIIDVQVFTRDGVEKDKRAIEIEEMHIAQARKDLGEEFKILEEGVLSRARNLLLSAGFTEAQIAALPRKDVLVQVIDDETKQTELEQLAEQHEELKADFDKKFEIKRRKITQGDDLAPGVLKIVKVYLAVKRTIQPGDKMAGRHGNKGVISKINPIEDMPYDEQGNPVDIVLNPLGVPSRMNIGQVLEVHLGAAAKGIGNKIAAMLEDQREKGLAEVRSYIKQVYELGDEVQQRVDIDSFTDDELLRLANNLKGGIPVATPAFDGAKEKEIKQMLELAGLPTSGQLKLFDGRTGNEFERPVTVGYMYMLKLNHLVDDKMHARSTGSYSLVTQQPLGGKAQFGGQRFGEMEVWALEAYGAAYTLQEMLTVKSDDVNGRTQMYKNIVDGNHQMQPGMPESFNVLLKEIRSLGINIELDQE</sequence>
<comment type="function">
    <text evidence="1">DNA-dependent RNA polymerase catalyzes the transcription of DNA into RNA using the four ribonucleoside triphosphates as substrates.</text>
</comment>
<comment type="catalytic activity">
    <reaction evidence="1">
        <text>RNA(n) + a ribonucleoside 5'-triphosphate = RNA(n+1) + diphosphate</text>
        <dbReference type="Rhea" id="RHEA:21248"/>
        <dbReference type="Rhea" id="RHEA-COMP:14527"/>
        <dbReference type="Rhea" id="RHEA-COMP:17342"/>
        <dbReference type="ChEBI" id="CHEBI:33019"/>
        <dbReference type="ChEBI" id="CHEBI:61557"/>
        <dbReference type="ChEBI" id="CHEBI:140395"/>
        <dbReference type="EC" id="2.7.7.6"/>
    </reaction>
</comment>
<comment type="subunit">
    <text evidence="1">The RNAP catalytic core consists of 2 alpha, 1 beta, 1 beta' and 1 omega subunit. When a sigma factor is associated with the core the holoenzyme is formed, which can initiate transcription.</text>
</comment>
<comment type="similarity">
    <text evidence="1">Belongs to the RNA polymerase beta chain family.</text>
</comment>
<gene>
    <name evidence="1" type="primary">rpoB</name>
    <name type="ordered locus">Shewmr7_0187</name>
</gene>
<proteinExistence type="inferred from homology"/>
<keyword id="KW-0240">DNA-directed RNA polymerase</keyword>
<keyword id="KW-0548">Nucleotidyltransferase</keyword>
<keyword id="KW-0804">Transcription</keyword>
<keyword id="KW-0808">Transferase</keyword>
<evidence type="ECO:0000255" key="1">
    <source>
        <dbReference type="HAMAP-Rule" id="MF_01321"/>
    </source>
</evidence>
<protein>
    <recommendedName>
        <fullName evidence="1">DNA-directed RNA polymerase subunit beta</fullName>
        <shortName evidence="1">RNAP subunit beta</shortName>
        <ecNumber evidence="1">2.7.7.6</ecNumber>
    </recommendedName>
    <alternativeName>
        <fullName evidence="1">RNA polymerase subunit beta</fullName>
    </alternativeName>
    <alternativeName>
        <fullName evidence="1">Transcriptase subunit beta</fullName>
    </alternativeName>
</protein>